<accession>Q9ZCC3</accession>
<evidence type="ECO:0000255" key="1">
    <source>
        <dbReference type="HAMAP-Rule" id="MF_00205"/>
    </source>
</evidence>
<keyword id="KW-0067">ATP-binding</keyword>
<keyword id="KW-0963">Cytoplasm</keyword>
<keyword id="KW-0227">DNA damage</keyword>
<keyword id="KW-0228">DNA excision</keyword>
<keyword id="KW-0234">DNA repair</keyword>
<keyword id="KW-0238">DNA-binding</keyword>
<keyword id="KW-0267">Excision nuclease</keyword>
<keyword id="KW-0479">Metal-binding</keyword>
<keyword id="KW-0547">Nucleotide-binding</keyword>
<keyword id="KW-1185">Reference proteome</keyword>
<keyword id="KW-0677">Repeat</keyword>
<keyword id="KW-0742">SOS response</keyword>
<keyword id="KW-0862">Zinc</keyword>
<keyword id="KW-0863">Zinc-finger</keyword>
<sequence length="953" mass="106287">MNQEYIKVRGAKEHNLKNINVDIPRNKFVVITGLSGSGKSSLAFDTIYAEGQRRYVESLSSYARQFLHLQNKPNVESISGLSPAIAIDQKTTSKNPRSTVGTITEIYDYLRLLYARVGIPYSPVTSLPIHSQTVAEMVDIINELPKGTKVYLLAPIVRGHKGEFKREIMNLKKQGFQKLIVNGEVCEIDDLPKLDKNKKHNIEVIVDRIVLDENLGNRLADSLESSLNLADGITYLEIVELPQAVKSQFEKNQRITFSEKYSCPVSGFQLTEIEPRIFSFNSPFGACPKCEGIGKEFFFDRDLIVQDQRISIKDGAIVPWGSTSSKFILETLKALADHYKFSIEVPFISLSQSVKDILFEGSGEEEIKFEFHDGSKTQIIKQPFAGIIPSLQEKDRTIESVLIKEELAKFKSEHKCTACSGFRLKDEALCVKIANLHIGEVAGMSIAALQKWFIHLEEKLNQKQLFIAKRILKEINERLKFLMNVGLDYLTLSREAGTLSGGESQRIRLASQIGSGLSGVLYVLDEPSIGLHQRDNTRLIATLKRLRDLGNTVLVVEHDEETMYEADHIIDIGPGAGIHGGRVIAEGNAEKIKHFEESITGRYLSGRQTIKVPSETRVGHDNRAIELLGAVSNNLDNVDIKIPLGTFTAITGVSGSGKSSLMIHTLYKAALKHLEPTSKVFPGKYRELKGLEYIDKIIDINQSPIGRTPRSNPATYTGAFTHIRDWFVELPESKARGYKVGRFSFNVKGGRCEACQGDGLIKIEMHFLPDVYVKCDICNGHRYNRETLEIKYKGKSIADILMMTVEDAMQFFDKIPLIYEKLITLNEVGLGYIKIGQSATTLSGGEAQRVKLAKELSRRSTGKTLYILDEPTTGLHIDDIKKLLKVLHKLVDMGNTVLVIEHNLDVIKTADYIIDVGPEGGDKGGKIVVCGTPTDIAACKESHTGRYLKQYLI</sequence>
<dbReference type="EMBL" id="AJ235273">
    <property type="protein sequence ID" value="CAA15260.1"/>
    <property type="molecule type" value="Genomic_DNA"/>
</dbReference>
<dbReference type="PIR" id="D71645">
    <property type="entry name" value="D71645"/>
</dbReference>
<dbReference type="RefSeq" id="NP_221184.1">
    <property type="nucleotide sequence ID" value="NC_000963.1"/>
</dbReference>
<dbReference type="RefSeq" id="WP_004596819.1">
    <property type="nucleotide sequence ID" value="NC_000963.1"/>
</dbReference>
<dbReference type="SMR" id="Q9ZCC3"/>
<dbReference type="STRING" id="272947.gene:17555904"/>
<dbReference type="EnsemblBacteria" id="CAA15260">
    <property type="protein sequence ID" value="CAA15260"/>
    <property type="gene ID" value="CAA15260"/>
</dbReference>
<dbReference type="GeneID" id="57569958"/>
<dbReference type="KEGG" id="rpr:RP835"/>
<dbReference type="PATRIC" id="fig|272947.5.peg.872"/>
<dbReference type="eggNOG" id="COG0178">
    <property type="taxonomic scope" value="Bacteria"/>
</dbReference>
<dbReference type="HOGENOM" id="CLU_001370_0_2_5"/>
<dbReference type="OrthoDB" id="9809851at2"/>
<dbReference type="Proteomes" id="UP000002480">
    <property type="component" value="Chromosome"/>
</dbReference>
<dbReference type="GO" id="GO:0005737">
    <property type="term" value="C:cytoplasm"/>
    <property type="evidence" value="ECO:0007669"/>
    <property type="project" value="UniProtKB-SubCell"/>
</dbReference>
<dbReference type="GO" id="GO:0009380">
    <property type="term" value="C:excinuclease repair complex"/>
    <property type="evidence" value="ECO:0007669"/>
    <property type="project" value="InterPro"/>
</dbReference>
<dbReference type="GO" id="GO:0005524">
    <property type="term" value="F:ATP binding"/>
    <property type="evidence" value="ECO:0007669"/>
    <property type="project" value="UniProtKB-UniRule"/>
</dbReference>
<dbReference type="GO" id="GO:0016887">
    <property type="term" value="F:ATP hydrolysis activity"/>
    <property type="evidence" value="ECO:0007669"/>
    <property type="project" value="InterPro"/>
</dbReference>
<dbReference type="GO" id="GO:0003677">
    <property type="term" value="F:DNA binding"/>
    <property type="evidence" value="ECO:0007669"/>
    <property type="project" value="UniProtKB-UniRule"/>
</dbReference>
<dbReference type="GO" id="GO:0009381">
    <property type="term" value="F:excinuclease ABC activity"/>
    <property type="evidence" value="ECO:0007669"/>
    <property type="project" value="UniProtKB-UniRule"/>
</dbReference>
<dbReference type="GO" id="GO:0008270">
    <property type="term" value="F:zinc ion binding"/>
    <property type="evidence" value="ECO:0007669"/>
    <property type="project" value="UniProtKB-UniRule"/>
</dbReference>
<dbReference type="GO" id="GO:0006289">
    <property type="term" value="P:nucleotide-excision repair"/>
    <property type="evidence" value="ECO:0007669"/>
    <property type="project" value="UniProtKB-UniRule"/>
</dbReference>
<dbReference type="GO" id="GO:0009432">
    <property type="term" value="P:SOS response"/>
    <property type="evidence" value="ECO:0007669"/>
    <property type="project" value="UniProtKB-UniRule"/>
</dbReference>
<dbReference type="CDD" id="cd03270">
    <property type="entry name" value="ABC_UvrA_I"/>
    <property type="match status" value="1"/>
</dbReference>
<dbReference type="CDD" id="cd03271">
    <property type="entry name" value="ABC_UvrA_II"/>
    <property type="match status" value="1"/>
</dbReference>
<dbReference type="FunFam" id="1.20.1580.10:FF:000002">
    <property type="entry name" value="UvrABC system protein A"/>
    <property type="match status" value="1"/>
</dbReference>
<dbReference type="Gene3D" id="3.30.190.20">
    <property type="match status" value="1"/>
</dbReference>
<dbReference type="Gene3D" id="1.10.8.280">
    <property type="entry name" value="ABC transporter ATPase domain-like"/>
    <property type="match status" value="1"/>
</dbReference>
<dbReference type="Gene3D" id="1.20.1580.10">
    <property type="entry name" value="ABC transporter ATPase like domain"/>
    <property type="match status" value="3"/>
</dbReference>
<dbReference type="Gene3D" id="3.40.50.300">
    <property type="entry name" value="P-loop containing nucleotide triphosphate hydrolases"/>
    <property type="match status" value="3"/>
</dbReference>
<dbReference type="HAMAP" id="MF_00205">
    <property type="entry name" value="UvrA"/>
    <property type="match status" value="1"/>
</dbReference>
<dbReference type="InterPro" id="IPR003439">
    <property type="entry name" value="ABC_transporter-like_ATP-bd"/>
</dbReference>
<dbReference type="InterPro" id="IPR017871">
    <property type="entry name" value="ABC_transporter-like_CS"/>
</dbReference>
<dbReference type="InterPro" id="IPR027417">
    <property type="entry name" value="P-loop_NTPase"/>
</dbReference>
<dbReference type="InterPro" id="IPR004602">
    <property type="entry name" value="UvrA"/>
</dbReference>
<dbReference type="InterPro" id="IPR041552">
    <property type="entry name" value="UvrA_DNA-bd"/>
</dbReference>
<dbReference type="InterPro" id="IPR041102">
    <property type="entry name" value="UvrA_inter"/>
</dbReference>
<dbReference type="NCBIfam" id="NF001503">
    <property type="entry name" value="PRK00349.1"/>
    <property type="match status" value="1"/>
</dbReference>
<dbReference type="NCBIfam" id="TIGR00630">
    <property type="entry name" value="uvra"/>
    <property type="match status" value="1"/>
</dbReference>
<dbReference type="PANTHER" id="PTHR43152">
    <property type="entry name" value="UVRABC SYSTEM PROTEIN A"/>
    <property type="match status" value="1"/>
</dbReference>
<dbReference type="PANTHER" id="PTHR43152:SF3">
    <property type="entry name" value="UVRABC SYSTEM PROTEIN A"/>
    <property type="match status" value="1"/>
</dbReference>
<dbReference type="Pfam" id="PF17755">
    <property type="entry name" value="UvrA_DNA-bind"/>
    <property type="match status" value="1"/>
</dbReference>
<dbReference type="Pfam" id="PF17760">
    <property type="entry name" value="UvrA_inter"/>
    <property type="match status" value="1"/>
</dbReference>
<dbReference type="SUPFAM" id="SSF52540">
    <property type="entry name" value="P-loop containing nucleoside triphosphate hydrolases"/>
    <property type="match status" value="2"/>
</dbReference>
<dbReference type="PROSITE" id="PS00211">
    <property type="entry name" value="ABC_TRANSPORTER_1"/>
    <property type="match status" value="2"/>
</dbReference>
<dbReference type="PROSITE" id="PS50893">
    <property type="entry name" value="ABC_TRANSPORTER_2"/>
    <property type="match status" value="2"/>
</dbReference>
<organism>
    <name type="scientific">Rickettsia prowazekii (strain Madrid E)</name>
    <dbReference type="NCBI Taxonomy" id="272947"/>
    <lineage>
        <taxon>Bacteria</taxon>
        <taxon>Pseudomonadati</taxon>
        <taxon>Pseudomonadota</taxon>
        <taxon>Alphaproteobacteria</taxon>
        <taxon>Rickettsiales</taxon>
        <taxon>Rickettsiaceae</taxon>
        <taxon>Rickettsieae</taxon>
        <taxon>Rickettsia</taxon>
        <taxon>typhus group</taxon>
    </lineage>
</organism>
<gene>
    <name evidence="1" type="primary">uvrA</name>
    <name type="ordered locus">RP835</name>
</gene>
<name>UVRA_RICPR</name>
<proteinExistence type="inferred from homology"/>
<feature type="chain" id="PRO_0000093084" description="UvrABC system protein A">
    <location>
        <begin position="1"/>
        <end position="953"/>
    </location>
</feature>
<feature type="domain" description="ABC transporter 1" evidence="1">
    <location>
        <begin position="320"/>
        <end position="599"/>
    </location>
</feature>
<feature type="domain" description="ABC transporter 2" evidence="1">
    <location>
        <begin position="619"/>
        <end position="949"/>
    </location>
</feature>
<feature type="zinc finger region" description="C4-type" evidence="1">
    <location>
        <begin position="752"/>
        <end position="778"/>
    </location>
</feature>
<feature type="binding site" evidence="1">
    <location>
        <begin position="33"/>
        <end position="40"/>
    </location>
    <ligand>
        <name>ATP</name>
        <dbReference type="ChEBI" id="CHEBI:30616"/>
    </ligand>
</feature>
<feature type="binding site" evidence="1">
    <location>
        <begin position="652"/>
        <end position="659"/>
    </location>
    <ligand>
        <name>ATP</name>
        <dbReference type="ChEBI" id="CHEBI:30616"/>
    </ligand>
</feature>
<reference key="1">
    <citation type="journal article" date="1998" name="Nature">
        <title>The genome sequence of Rickettsia prowazekii and the origin of mitochondria.</title>
        <authorList>
            <person name="Andersson S.G.E."/>
            <person name="Zomorodipour A."/>
            <person name="Andersson J.O."/>
            <person name="Sicheritz-Ponten T."/>
            <person name="Alsmark U.C.M."/>
            <person name="Podowski R.M."/>
            <person name="Naeslund A.K."/>
            <person name="Eriksson A.-S."/>
            <person name="Winkler H.H."/>
            <person name="Kurland C.G."/>
        </authorList>
    </citation>
    <scope>NUCLEOTIDE SEQUENCE [LARGE SCALE GENOMIC DNA]</scope>
    <source>
        <strain>Madrid E</strain>
    </source>
</reference>
<protein>
    <recommendedName>
        <fullName evidence="1">UvrABC system protein A</fullName>
        <shortName evidence="1">UvrA protein</shortName>
    </recommendedName>
    <alternativeName>
        <fullName evidence="1">Excinuclease ABC subunit A</fullName>
    </alternativeName>
</protein>
<comment type="function">
    <text evidence="1">The UvrABC repair system catalyzes the recognition and processing of DNA lesions. UvrA is an ATPase and a DNA-binding protein. A damage recognition complex composed of 2 UvrA and 2 UvrB subunits scans DNA for abnormalities. When the presence of a lesion has been verified by UvrB, the UvrA molecules dissociate.</text>
</comment>
<comment type="subunit">
    <text evidence="1">Forms a heterotetramer with UvrB during the search for lesions.</text>
</comment>
<comment type="subcellular location">
    <subcellularLocation>
        <location evidence="1">Cytoplasm</location>
    </subcellularLocation>
</comment>
<comment type="similarity">
    <text evidence="1">Belongs to the ABC transporter superfamily. UvrA family.</text>
</comment>